<reference key="1">
    <citation type="journal article" date="1998" name="Nature">
        <title>Deciphering the biology of Mycobacterium tuberculosis from the complete genome sequence.</title>
        <authorList>
            <person name="Cole S.T."/>
            <person name="Brosch R."/>
            <person name="Parkhill J."/>
            <person name="Garnier T."/>
            <person name="Churcher C.M."/>
            <person name="Harris D.E."/>
            <person name="Gordon S.V."/>
            <person name="Eiglmeier K."/>
            <person name="Gas S."/>
            <person name="Barry C.E. III"/>
            <person name="Tekaia F."/>
            <person name="Badcock K."/>
            <person name="Basham D."/>
            <person name="Brown D."/>
            <person name="Chillingworth T."/>
            <person name="Connor R."/>
            <person name="Davies R.M."/>
            <person name="Devlin K."/>
            <person name="Feltwell T."/>
            <person name="Gentles S."/>
            <person name="Hamlin N."/>
            <person name="Holroyd S."/>
            <person name="Hornsby T."/>
            <person name="Jagels K."/>
            <person name="Krogh A."/>
            <person name="McLean J."/>
            <person name="Moule S."/>
            <person name="Murphy L.D."/>
            <person name="Oliver S."/>
            <person name="Osborne J."/>
            <person name="Quail M.A."/>
            <person name="Rajandream M.A."/>
            <person name="Rogers J."/>
            <person name="Rutter S."/>
            <person name="Seeger K."/>
            <person name="Skelton S."/>
            <person name="Squares S."/>
            <person name="Squares R."/>
            <person name="Sulston J.E."/>
            <person name="Taylor K."/>
            <person name="Whitehead S."/>
            <person name="Barrell B.G."/>
        </authorList>
    </citation>
    <scope>NUCLEOTIDE SEQUENCE [LARGE SCALE GENOMIC DNA]</scope>
    <source>
        <strain>ATCC 25618 / H37Rv</strain>
    </source>
</reference>
<reference key="2">
    <citation type="journal article" date="2001" name="Proteomics">
        <title>Identification of acidic, low molecular mass proteins of Mycobacterium tuberculosis strain H37Rv by matrix-assisted laser desorption/ionization and electrospray ionization mass spectrometry.</title>
        <authorList>
            <person name="Mattow J."/>
            <person name="Jungblut P.R."/>
            <person name="Mueller E.-C."/>
            <person name="Kaufmann S.H.E."/>
        </authorList>
    </citation>
    <scope>IDENTIFICATION BY MASS SPECTROMETRY</scope>
    <source>
        <strain>ATCC 25618 / H37Rv</strain>
    </source>
</reference>
<reference key="3">
    <citation type="journal article" date="2011" name="Mol. Cell. Proteomics">
        <title>Proteogenomic analysis of Mycobacterium tuberculosis by high resolution mass spectrometry.</title>
        <authorList>
            <person name="Kelkar D.S."/>
            <person name="Kumar D."/>
            <person name="Kumar P."/>
            <person name="Balakrishnan L."/>
            <person name="Muthusamy B."/>
            <person name="Yadav A.K."/>
            <person name="Shrivastava P."/>
            <person name="Marimuthu A."/>
            <person name="Anand S."/>
            <person name="Sundaram H."/>
            <person name="Kingsbury R."/>
            <person name="Harsha H.C."/>
            <person name="Nair B."/>
            <person name="Prasad T.S."/>
            <person name="Chauhan D.S."/>
            <person name="Katoch K."/>
            <person name="Katoch V.M."/>
            <person name="Kumar P."/>
            <person name="Chaerkady R."/>
            <person name="Ramachandran S."/>
            <person name="Dash D."/>
            <person name="Pandey A."/>
        </authorList>
    </citation>
    <scope>IDENTIFICATION BY MASS SPECTROMETRY [LARGE SCALE ANALYSIS]</scope>
    <source>
        <strain>ATCC 25618 / H37Rv</strain>
    </source>
</reference>
<protein>
    <recommendedName>
        <fullName>Protein Rv1269c</fullName>
    </recommendedName>
</protein>
<proteinExistence type="evidence at protein level"/>
<feature type="signal peptide" description="Tat-type signal" evidence="1">
    <location>
        <begin position="1"/>
        <end position="35"/>
    </location>
</feature>
<feature type="chain" id="PRO_0000014089" description="Protein Rv1269c">
    <location>
        <begin position="36"/>
        <end position="124"/>
    </location>
</feature>
<comment type="PTM">
    <text>Predicted to be exported by the Tat system. The position of the signal peptide cleavage has not been experimentally proven.</text>
</comment>
<comment type="similarity">
    <text evidence="2">To M.tuberculosis Rv1813c.</text>
</comment>
<sequence length="124" mass="12550">MTTMITLRRRFAVAVAGVATAAATTVTLAPAPANAADVYGAIAYSGNGSWGRSWDYPTRAAAEATAVKSCGYSDCKVLTSFTACGAVAANDRAYQGGVGPTLAAAMKDALTKLGGGYIDTWACN</sequence>
<evidence type="ECO:0000255" key="1">
    <source>
        <dbReference type="PROSITE-ProRule" id="PRU00648"/>
    </source>
</evidence>
<evidence type="ECO:0000305" key="2"/>
<dbReference type="EMBL" id="AL123456">
    <property type="protein sequence ID" value="CCP44025.1"/>
    <property type="molecule type" value="Genomic_DNA"/>
</dbReference>
<dbReference type="PIR" id="E70754">
    <property type="entry name" value="E70754"/>
</dbReference>
<dbReference type="RefSeq" id="NP_215785.1">
    <property type="nucleotide sequence ID" value="NC_000962.3"/>
</dbReference>
<dbReference type="RefSeq" id="WP_003406558.1">
    <property type="nucleotide sequence ID" value="NZ_NVQJ01000030.1"/>
</dbReference>
<dbReference type="SMR" id="P9WM45"/>
<dbReference type="STRING" id="83332.Rv1269c"/>
<dbReference type="PaxDb" id="83332-Rv1269c"/>
<dbReference type="DNASU" id="887039"/>
<dbReference type="GeneID" id="887039"/>
<dbReference type="KEGG" id="mtu:Rv1269c"/>
<dbReference type="KEGG" id="mtv:RVBD_1269c"/>
<dbReference type="TubercuList" id="Rv1269c"/>
<dbReference type="eggNOG" id="ENOG502ZK3D">
    <property type="taxonomic scope" value="Bacteria"/>
</dbReference>
<dbReference type="InParanoid" id="P9WM45"/>
<dbReference type="OrthoDB" id="3483193at2"/>
<dbReference type="Proteomes" id="UP000001584">
    <property type="component" value="Chromosome"/>
</dbReference>
<dbReference type="GO" id="GO:0005576">
    <property type="term" value="C:extracellular region"/>
    <property type="evidence" value="ECO:0007005"/>
    <property type="project" value="MTBBASE"/>
</dbReference>
<dbReference type="GO" id="GO:0009274">
    <property type="term" value="C:peptidoglycan-based cell wall"/>
    <property type="evidence" value="ECO:0007005"/>
    <property type="project" value="MTBBASE"/>
</dbReference>
<dbReference type="InterPro" id="IPR025240">
    <property type="entry name" value="DUF4189"/>
</dbReference>
<dbReference type="InterPro" id="IPR006311">
    <property type="entry name" value="TAT_signal"/>
</dbReference>
<dbReference type="Pfam" id="PF13827">
    <property type="entry name" value="DUF4189"/>
    <property type="match status" value="1"/>
</dbReference>
<dbReference type="PROSITE" id="PS51318">
    <property type="entry name" value="TAT"/>
    <property type="match status" value="1"/>
</dbReference>
<organism>
    <name type="scientific">Mycobacterium tuberculosis (strain ATCC 25618 / H37Rv)</name>
    <dbReference type="NCBI Taxonomy" id="83332"/>
    <lineage>
        <taxon>Bacteria</taxon>
        <taxon>Bacillati</taxon>
        <taxon>Actinomycetota</taxon>
        <taxon>Actinomycetes</taxon>
        <taxon>Mycobacteriales</taxon>
        <taxon>Mycobacteriaceae</taxon>
        <taxon>Mycobacterium</taxon>
        <taxon>Mycobacterium tuberculosis complex</taxon>
    </lineage>
</organism>
<gene>
    <name type="ordered locus">Rv1269c</name>
    <name type="ORF">MTCY50.13</name>
</gene>
<keyword id="KW-1185">Reference proteome</keyword>
<keyword id="KW-0732">Signal</keyword>
<accession>P9WM45</accession>
<accession>L0T7S6</accession>
<accession>P0A5E1</accession>
<accession>Q11050</accession>
<name>Y1269_MYCTU</name>